<evidence type="ECO:0000250" key="1">
    <source>
        <dbReference type="UniProtKB" id="Q8N138"/>
    </source>
</evidence>
<evidence type="ECO:0000255" key="2"/>
<evidence type="ECO:0000269" key="3">
    <source>
    </source>
</evidence>
<evidence type="ECO:0000269" key="4">
    <source>
    </source>
</evidence>
<evidence type="ECO:0000305" key="5"/>
<proteinExistence type="evidence at transcript level"/>
<keyword id="KW-0256">Endoplasmic reticulum</keyword>
<keyword id="KW-0379">Hydroxylation</keyword>
<keyword id="KW-0472">Membrane</keyword>
<keyword id="KW-1185">Reference proteome</keyword>
<keyword id="KW-0812">Transmembrane</keyword>
<keyword id="KW-1133">Transmembrane helix</keyword>
<keyword id="KW-0832">Ubl conjugation</keyword>
<comment type="function">
    <text evidence="1 3 4">Plays an essential role in the homeostatic regulation of sphingolipid de novo biosynthesis by modulating the activity of the serine palmitoyltransferase (SPT) in response to ceramide levels (PubMed:30700557, PubMed:31880535). When complexed to SPT, the binding of ceramides to its N-terminus stabilizes a conformation that block SPT substrate entry, hence preventing SPT catalytic activity. Through this mechanism, maintains ceramide levels at sufficient concentrations for the production of complex sphingolipids, but which prevents the accumulation of ceramides to levels that trigger apoptosis (By similarity).</text>
</comment>
<comment type="subunit">
    <text evidence="1">Ceramide-sensitive subunit of the serine palmitoyltransferase (SPT) complex, which is also composed of SPTLC1, SPTLC2/3 and SPTSSA/B.</text>
</comment>
<comment type="subcellular location">
    <subcellularLocation>
        <location evidence="1">Endoplasmic reticulum membrane</location>
        <topology evidence="1">Multi-pass membrane protein</topology>
    </subcellularLocation>
</comment>
<comment type="domain">
    <text evidence="1">Ceramides bind to ORMDL3 N-terminus and stabilize it in a conformation that physically restricts the accessibility of the substrates to their binding sites in the serine palmitoyltransferase (SPT) complex, hence inhibiting SPT catalytic activity. In the absence of ceramides, the N-terminus is flexible and permits substrate binding, thus liberating SPT from inhibition.</text>
</comment>
<comment type="PTM">
    <text evidence="1">When hydroxylated at Pro-137, ubiquitinated via 'Lys-48'-linkage, leading to proteasomal degradation. In endothelial cells, ORMDL3 proteasomal degradation is controlled by the sphingosine 1-phosphate receptor signaling pathway.</text>
</comment>
<comment type="disruption phenotype">
    <text evidence="4">No overt phenotype, although knockout mice show elevated brain levels of sphingolipids, including dihydrosphingosine, dihydroceramide, ceramide and sphingosine, compared with wild-type animals (PubMed:31880535). Double knockdown of ORMDL1 and ORMDL3 show elevated brain levels of sphingolipids, compared with single knockout and wild-type animals (PubMed:31880535). At 8 weeks of age, both male and female ORMDL1/3 double knockout mice weigh significantly less than wild-type mice and exhibit impaired myelination and motor-function abnormalities (PubMed:31880535). The triple knockout ORMDL1, ORMDL2 and ORMDL3 is not viable (PubMed:31880535).</text>
</comment>
<comment type="similarity">
    <text evidence="5">Belongs to the ORM family.</text>
</comment>
<protein>
    <recommendedName>
        <fullName>ORM1-like protein 3</fullName>
    </recommendedName>
</protein>
<organism>
    <name type="scientific">Mus musculus</name>
    <name type="common">Mouse</name>
    <dbReference type="NCBI Taxonomy" id="10090"/>
    <lineage>
        <taxon>Eukaryota</taxon>
        <taxon>Metazoa</taxon>
        <taxon>Chordata</taxon>
        <taxon>Craniata</taxon>
        <taxon>Vertebrata</taxon>
        <taxon>Euteleostomi</taxon>
        <taxon>Mammalia</taxon>
        <taxon>Eutheria</taxon>
        <taxon>Euarchontoglires</taxon>
        <taxon>Glires</taxon>
        <taxon>Rodentia</taxon>
        <taxon>Myomorpha</taxon>
        <taxon>Muroidea</taxon>
        <taxon>Muridae</taxon>
        <taxon>Murinae</taxon>
        <taxon>Mus</taxon>
        <taxon>Mus</taxon>
    </lineage>
</organism>
<dbReference type="EMBL" id="AK009621">
    <property type="protein sequence ID" value="BAB26397.1"/>
    <property type="molecule type" value="mRNA"/>
</dbReference>
<dbReference type="EMBL" id="AK012718">
    <property type="protein sequence ID" value="BAB28432.1"/>
    <property type="molecule type" value="mRNA"/>
</dbReference>
<dbReference type="EMBL" id="AK154085">
    <property type="protein sequence ID" value="BAE32363.1"/>
    <property type="molecule type" value="mRNA"/>
</dbReference>
<dbReference type="EMBL" id="AK087497">
    <property type="protein sequence ID" value="BAC39898.1"/>
    <property type="molecule type" value="mRNA"/>
</dbReference>
<dbReference type="EMBL" id="AL591125">
    <property type="status" value="NOT_ANNOTATED_CDS"/>
    <property type="molecule type" value="Genomic_DNA"/>
</dbReference>
<dbReference type="EMBL" id="CH466556">
    <property type="protein sequence ID" value="EDL16151.1"/>
    <property type="molecule type" value="Genomic_DNA"/>
</dbReference>
<dbReference type="EMBL" id="BC026412">
    <property type="protein sequence ID" value="AAH26412.1"/>
    <property type="molecule type" value="mRNA"/>
</dbReference>
<dbReference type="EMBL" id="BC046594">
    <property type="protein sequence ID" value="AAH46594.1"/>
    <property type="molecule type" value="mRNA"/>
</dbReference>
<dbReference type="CCDS" id="CCDS25355.1"/>
<dbReference type="RefSeq" id="NP_079937.1">
    <property type="nucleotide sequence ID" value="NM_025661.4"/>
</dbReference>
<dbReference type="SMR" id="Q9CPZ6"/>
<dbReference type="BioGRID" id="211595">
    <property type="interactions" value="3"/>
</dbReference>
<dbReference type="FunCoup" id="Q9CPZ6">
    <property type="interactions" value="1170"/>
</dbReference>
<dbReference type="IntAct" id="Q9CPZ6">
    <property type="interactions" value="1"/>
</dbReference>
<dbReference type="STRING" id="10090.ENSMUSP00000053056"/>
<dbReference type="iPTMnet" id="Q9CPZ6"/>
<dbReference type="PhosphoSitePlus" id="Q9CPZ6"/>
<dbReference type="jPOST" id="Q9CPZ6"/>
<dbReference type="PaxDb" id="10090-ENSMUSP00000053056"/>
<dbReference type="PeptideAtlas" id="Q9CPZ6"/>
<dbReference type="ProteomicsDB" id="295475"/>
<dbReference type="Pumba" id="Q9CPZ6"/>
<dbReference type="TopDownProteomics" id="Q9CPZ6"/>
<dbReference type="Antibodypedia" id="54876">
    <property type="antibodies" value="112 antibodies from 22 providers"/>
</dbReference>
<dbReference type="DNASU" id="66612"/>
<dbReference type="Ensembl" id="ENSMUST00000052919.8">
    <property type="protein sequence ID" value="ENSMUSP00000053056.8"/>
    <property type="gene ID" value="ENSMUSG00000038150.8"/>
</dbReference>
<dbReference type="GeneID" id="66612"/>
<dbReference type="KEGG" id="mmu:66612"/>
<dbReference type="UCSC" id="uc007lgr.1">
    <property type="organism name" value="mouse"/>
</dbReference>
<dbReference type="AGR" id="MGI:1913862"/>
<dbReference type="CTD" id="94103"/>
<dbReference type="MGI" id="MGI:1913862">
    <property type="gene designation" value="Ormdl3"/>
</dbReference>
<dbReference type="VEuPathDB" id="HostDB:ENSMUSG00000038150"/>
<dbReference type="eggNOG" id="KOG3319">
    <property type="taxonomic scope" value="Eukaryota"/>
</dbReference>
<dbReference type="GeneTree" id="ENSGT00950000183178"/>
<dbReference type="HOGENOM" id="CLU_072117_3_0_1"/>
<dbReference type="InParanoid" id="Q9CPZ6"/>
<dbReference type="OMA" id="WTAYILI"/>
<dbReference type="OrthoDB" id="1932233at2759"/>
<dbReference type="PhylomeDB" id="Q9CPZ6"/>
<dbReference type="TreeFam" id="TF323369"/>
<dbReference type="Reactome" id="R-MMU-1660661">
    <property type="pathway name" value="Sphingolipid de novo biosynthesis"/>
</dbReference>
<dbReference type="Reactome" id="R-MMU-6798695">
    <property type="pathway name" value="Neutrophil degranulation"/>
</dbReference>
<dbReference type="BioGRID-ORCS" id="66612">
    <property type="hits" value="7 hits in 78 CRISPR screens"/>
</dbReference>
<dbReference type="ChiTaRS" id="Ormdl3">
    <property type="organism name" value="mouse"/>
</dbReference>
<dbReference type="PRO" id="PR:Q9CPZ6"/>
<dbReference type="Proteomes" id="UP000000589">
    <property type="component" value="Chromosome 11"/>
</dbReference>
<dbReference type="RNAct" id="Q9CPZ6">
    <property type="molecule type" value="protein"/>
</dbReference>
<dbReference type="Bgee" id="ENSMUSG00000038150">
    <property type="expression patterns" value="Expressed in olfactory epithelium and 253 other cell types or tissues"/>
</dbReference>
<dbReference type="GO" id="GO:0005783">
    <property type="term" value="C:endoplasmic reticulum"/>
    <property type="evidence" value="ECO:0000250"/>
    <property type="project" value="UniProtKB"/>
</dbReference>
<dbReference type="GO" id="GO:0005789">
    <property type="term" value="C:endoplasmic reticulum membrane"/>
    <property type="evidence" value="ECO:0007669"/>
    <property type="project" value="UniProtKB-SubCell"/>
</dbReference>
<dbReference type="GO" id="GO:0017059">
    <property type="term" value="C:serine palmitoyltransferase complex"/>
    <property type="evidence" value="ECO:0000250"/>
    <property type="project" value="UniProtKB"/>
</dbReference>
<dbReference type="GO" id="GO:0006672">
    <property type="term" value="P:ceramide metabolic process"/>
    <property type="evidence" value="ECO:0000250"/>
    <property type="project" value="UniProtKB"/>
</dbReference>
<dbReference type="GO" id="GO:0061744">
    <property type="term" value="P:motor behavior"/>
    <property type="evidence" value="ECO:0000316"/>
    <property type="project" value="MGI"/>
</dbReference>
<dbReference type="GO" id="GO:0042552">
    <property type="term" value="P:myelination"/>
    <property type="evidence" value="ECO:0000316"/>
    <property type="project" value="MGI"/>
</dbReference>
<dbReference type="GO" id="GO:0002903">
    <property type="term" value="P:negative regulation of B cell apoptotic process"/>
    <property type="evidence" value="ECO:0000315"/>
    <property type="project" value="MGI"/>
</dbReference>
<dbReference type="GO" id="GO:1900060">
    <property type="term" value="P:negative regulation of ceramide biosynthetic process"/>
    <property type="evidence" value="ECO:0000314"/>
    <property type="project" value="MGI"/>
</dbReference>
<dbReference type="GO" id="GO:0010508">
    <property type="term" value="P:positive regulation of autophagy"/>
    <property type="evidence" value="ECO:0000315"/>
    <property type="project" value="MGI"/>
</dbReference>
<dbReference type="GO" id="GO:1900182">
    <property type="term" value="P:positive regulation of protein localization to nucleus"/>
    <property type="evidence" value="ECO:0000266"/>
    <property type="project" value="MGI"/>
</dbReference>
<dbReference type="GO" id="GO:2000303">
    <property type="term" value="P:regulation of ceramide biosynthetic process"/>
    <property type="evidence" value="ECO:0000315"/>
    <property type="project" value="MGI"/>
</dbReference>
<dbReference type="GO" id="GO:0006940">
    <property type="term" value="P:regulation of smooth muscle contraction"/>
    <property type="evidence" value="ECO:0000315"/>
    <property type="project" value="MGI"/>
</dbReference>
<dbReference type="GO" id="GO:0090153">
    <property type="term" value="P:regulation of sphingolipid biosynthetic process"/>
    <property type="evidence" value="ECO:0000315"/>
    <property type="project" value="MGI"/>
</dbReference>
<dbReference type="GO" id="GO:0006686">
    <property type="term" value="P:sphingomyelin biosynthetic process"/>
    <property type="evidence" value="ECO:0000315"/>
    <property type="project" value="MGI"/>
</dbReference>
<dbReference type="InterPro" id="IPR007203">
    <property type="entry name" value="ORMDL"/>
</dbReference>
<dbReference type="PANTHER" id="PTHR12665">
    <property type="entry name" value="ORMDL PROTEINS"/>
    <property type="match status" value="1"/>
</dbReference>
<dbReference type="Pfam" id="PF04061">
    <property type="entry name" value="ORMDL"/>
    <property type="match status" value="1"/>
</dbReference>
<dbReference type="PIRSF" id="PIRSF018147">
    <property type="entry name" value="ORMDL"/>
    <property type="match status" value="1"/>
</dbReference>
<gene>
    <name type="primary">Ormdl3</name>
</gene>
<reference key="1">
    <citation type="journal article" date="2005" name="Science">
        <title>The transcriptional landscape of the mammalian genome.</title>
        <authorList>
            <person name="Carninci P."/>
            <person name="Kasukawa T."/>
            <person name="Katayama S."/>
            <person name="Gough J."/>
            <person name="Frith M.C."/>
            <person name="Maeda N."/>
            <person name="Oyama R."/>
            <person name="Ravasi T."/>
            <person name="Lenhard B."/>
            <person name="Wells C."/>
            <person name="Kodzius R."/>
            <person name="Shimokawa K."/>
            <person name="Bajic V.B."/>
            <person name="Brenner S.E."/>
            <person name="Batalov S."/>
            <person name="Forrest A.R."/>
            <person name="Zavolan M."/>
            <person name="Davis M.J."/>
            <person name="Wilming L.G."/>
            <person name="Aidinis V."/>
            <person name="Allen J.E."/>
            <person name="Ambesi-Impiombato A."/>
            <person name="Apweiler R."/>
            <person name="Aturaliya R.N."/>
            <person name="Bailey T.L."/>
            <person name="Bansal M."/>
            <person name="Baxter L."/>
            <person name="Beisel K.W."/>
            <person name="Bersano T."/>
            <person name="Bono H."/>
            <person name="Chalk A.M."/>
            <person name="Chiu K.P."/>
            <person name="Choudhary V."/>
            <person name="Christoffels A."/>
            <person name="Clutterbuck D.R."/>
            <person name="Crowe M.L."/>
            <person name="Dalla E."/>
            <person name="Dalrymple B.P."/>
            <person name="de Bono B."/>
            <person name="Della Gatta G."/>
            <person name="di Bernardo D."/>
            <person name="Down T."/>
            <person name="Engstrom P."/>
            <person name="Fagiolini M."/>
            <person name="Faulkner G."/>
            <person name="Fletcher C.F."/>
            <person name="Fukushima T."/>
            <person name="Furuno M."/>
            <person name="Futaki S."/>
            <person name="Gariboldi M."/>
            <person name="Georgii-Hemming P."/>
            <person name="Gingeras T.R."/>
            <person name="Gojobori T."/>
            <person name="Green R.E."/>
            <person name="Gustincich S."/>
            <person name="Harbers M."/>
            <person name="Hayashi Y."/>
            <person name="Hensch T.K."/>
            <person name="Hirokawa N."/>
            <person name="Hill D."/>
            <person name="Huminiecki L."/>
            <person name="Iacono M."/>
            <person name="Ikeo K."/>
            <person name="Iwama A."/>
            <person name="Ishikawa T."/>
            <person name="Jakt M."/>
            <person name="Kanapin A."/>
            <person name="Katoh M."/>
            <person name="Kawasawa Y."/>
            <person name="Kelso J."/>
            <person name="Kitamura H."/>
            <person name="Kitano H."/>
            <person name="Kollias G."/>
            <person name="Krishnan S.P."/>
            <person name="Kruger A."/>
            <person name="Kummerfeld S.K."/>
            <person name="Kurochkin I.V."/>
            <person name="Lareau L.F."/>
            <person name="Lazarevic D."/>
            <person name="Lipovich L."/>
            <person name="Liu J."/>
            <person name="Liuni S."/>
            <person name="McWilliam S."/>
            <person name="Madan Babu M."/>
            <person name="Madera M."/>
            <person name="Marchionni L."/>
            <person name="Matsuda H."/>
            <person name="Matsuzawa S."/>
            <person name="Miki H."/>
            <person name="Mignone F."/>
            <person name="Miyake S."/>
            <person name="Morris K."/>
            <person name="Mottagui-Tabar S."/>
            <person name="Mulder N."/>
            <person name="Nakano N."/>
            <person name="Nakauchi H."/>
            <person name="Ng P."/>
            <person name="Nilsson R."/>
            <person name="Nishiguchi S."/>
            <person name="Nishikawa S."/>
            <person name="Nori F."/>
            <person name="Ohara O."/>
            <person name="Okazaki Y."/>
            <person name="Orlando V."/>
            <person name="Pang K.C."/>
            <person name="Pavan W.J."/>
            <person name="Pavesi G."/>
            <person name="Pesole G."/>
            <person name="Petrovsky N."/>
            <person name="Piazza S."/>
            <person name="Reed J."/>
            <person name="Reid J.F."/>
            <person name="Ring B.Z."/>
            <person name="Ringwald M."/>
            <person name="Rost B."/>
            <person name="Ruan Y."/>
            <person name="Salzberg S.L."/>
            <person name="Sandelin A."/>
            <person name="Schneider C."/>
            <person name="Schoenbach C."/>
            <person name="Sekiguchi K."/>
            <person name="Semple C.A."/>
            <person name="Seno S."/>
            <person name="Sessa L."/>
            <person name="Sheng Y."/>
            <person name="Shibata Y."/>
            <person name="Shimada H."/>
            <person name="Shimada K."/>
            <person name="Silva D."/>
            <person name="Sinclair B."/>
            <person name="Sperling S."/>
            <person name="Stupka E."/>
            <person name="Sugiura K."/>
            <person name="Sultana R."/>
            <person name="Takenaka Y."/>
            <person name="Taki K."/>
            <person name="Tammoja K."/>
            <person name="Tan S.L."/>
            <person name="Tang S."/>
            <person name="Taylor M.S."/>
            <person name="Tegner J."/>
            <person name="Teichmann S.A."/>
            <person name="Ueda H.R."/>
            <person name="van Nimwegen E."/>
            <person name="Verardo R."/>
            <person name="Wei C.L."/>
            <person name="Yagi K."/>
            <person name="Yamanishi H."/>
            <person name="Zabarovsky E."/>
            <person name="Zhu S."/>
            <person name="Zimmer A."/>
            <person name="Hide W."/>
            <person name="Bult C."/>
            <person name="Grimmond S.M."/>
            <person name="Teasdale R.D."/>
            <person name="Liu E.T."/>
            <person name="Brusic V."/>
            <person name="Quackenbush J."/>
            <person name="Wahlestedt C."/>
            <person name="Mattick J.S."/>
            <person name="Hume D.A."/>
            <person name="Kai C."/>
            <person name="Sasaki D."/>
            <person name="Tomaru Y."/>
            <person name="Fukuda S."/>
            <person name="Kanamori-Katayama M."/>
            <person name="Suzuki M."/>
            <person name="Aoki J."/>
            <person name="Arakawa T."/>
            <person name="Iida J."/>
            <person name="Imamura K."/>
            <person name="Itoh M."/>
            <person name="Kato T."/>
            <person name="Kawaji H."/>
            <person name="Kawagashira N."/>
            <person name="Kawashima T."/>
            <person name="Kojima M."/>
            <person name="Kondo S."/>
            <person name="Konno H."/>
            <person name="Nakano K."/>
            <person name="Ninomiya N."/>
            <person name="Nishio T."/>
            <person name="Okada M."/>
            <person name="Plessy C."/>
            <person name="Shibata K."/>
            <person name="Shiraki T."/>
            <person name="Suzuki S."/>
            <person name="Tagami M."/>
            <person name="Waki K."/>
            <person name="Watahiki A."/>
            <person name="Okamura-Oho Y."/>
            <person name="Suzuki H."/>
            <person name="Kawai J."/>
            <person name="Hayashizaki Y."/>
        </authorList>
    </citation>
    <scope>NUCLEOTIDE SEQUENCE [LARGE SCALE MRNA]</scope>
    <source>
        <strain>C57BL/6J</strain>
        <strain>NOD</strain>
        <tissue>Eye</tissue>
        <tissue>Thymus</tissue>
        <tissue>Tongue</tissue>
    </source>
</reference>
<reference key="2">
    <citation type="journal article" date="2009" name="PLoS Biol.">
        <title>Lineage-specific biology revealed by a finished genome assembly of the mouse.</title>
        <authorList>
            <person name="Church D.M."/>
            <person name="Goodstadt L."/>
            <person name="Hillier L.W."/>
            <person name="Zody M.C."/>
            <person name="Goldstein S."/>
            <person name="She X."/>
            <person name="Bult C.J."/>
            <person name="Agarwala R."/>
            <person name="Cherry J.L."/>
            <person name="DiCuccio M."/>
            <person name="Hlavina W."/>
            <person name="Kapustin Y."/>
            <person name="Meric P."/>
            <person name="Maglott D."/>
            <person name="Birtle Z."/>
            <person name="Marques A.C."/>
            <person name="Graves T."/>
            <person name="Zhou S."/>
            <person name="Teague B."/>
            <person name="Potamousis K."/>
            <person name="Churas C."/>
            <person name="Place M."/>
            <person name="Herschleb J."/>
            <person name="Runnheim R."/>
            <person name="Forrest D."/>
            <person name="Amos-Landgraf J."/>
            <person name="Schwartz D.C."/>
            <person name="Cheng Z."/>
            <person name="Lindblad-Toh K."/>
            <person name="Eichler E.E."/>
            <person name="Ponting C.P."/>
        </authorList>
    </citation>
    <scope>NUCLEOTIDE SEQUENCE [LARGE SCALE GENOMIC DNA]</scope>
    <source>
        <strain>C57BL/6J</strain>
    </source>
</reference>
<reference key="3">
    <citation type="submission" date="2005-07" db="EMBL/GenBank/DDBJ databases">
        <authorList>
            <person name="Mural R.J."/>
            <person name="Adams M.D."/>
            <person name="Myers E.W."/>
            <person name="Smith H.O."/>
            <person name="Venter J.C."/>
        </authorList>
    </citation>
    <scope>NUCLEOTIDE SEQUENCE [LARGE SCALE GENOMIC DNA]</scope>
</reference>
<reference key="4">
    <citation type="journal article" date="2004" name="Genome Res.">
        <title>The status, quality, and expansion of the NIH full-length cDNA project: the Mammalian Gene Collection (MGC).</title>
        <authorList>
            <consortium name="The MGC Project Team"/>
        </authorList>
    </citation>
    <scope>NUCLEOTIDE SEQUENCE [LARGE SCALE MRNA]</scope>
    <source>
        <tissue>Colon</tissue>
        <tissue>Olfactory epithelium</tissue>
    </source>
</reference>
<reference key="5">
    <citation type="journal article" date="2019" name="Elife">
        <title>The Ormdl genes regulate the sphingolipid synthesis pathway to ensure proper myelination and neurologic function in mice.</title>
        <authorList>
            <person name="Clarke B.A."/>
            <person name="Majumder S."/>
            <person name="Zhu H."/>
            <person name="Lee Y.T."/>
            <person name="Kono M."/>
            <person name="Li C."/>
            <person name="Khanna C."/>
            <person name="Blain H."/>
            <person name="Schwartz R."/>
            <person name="Huso V.L."/>
            <person name="Byrnes C."/>
            <person name="Tuymetova G."/>
            <person name="Dunn T.M."/>
            <person name="Allende M.L."/>
            <person name="Proia R.L."/>
        </authorList>
    </citation>
    <scope>FUNCTION</scope>
    <scope>DISRUPTION PHENOTYPE</scope>
</reference>
<reference key="6">
    <citation type="journal article" date="2019" name="J. Biol. Chem.">
        <title>The ORMDL/Orm-serine palmitoyltransferase (SPT) complex is directly regulated by ceramide: Reconstitution of SPT regulation in isolated membranes.</title>
        <authorList>
            <person name="Davis D.L."/>
            <person name="Gable K."/>
            <person name="Suemitsu J."/>
            <person name="Dunn T.M."/>
            <person name="Wattenberg B.W."/>
        </authorList>
    </citation>
    <scope>FUNCTION</scope>
</reference>
<sequence length="153" mass="17477">MNVGTAHSEVNPNTRVMNSRGIWLSYVLAIGLLHVVLLSIPFVSVPVVWTLTNLIHNLGMYIFLHTVKGTPFETPDQGKARLLTHWEQMDYGVQFTASRKFLTITPIVLYFLTSFYTKYDQVHFILNTVSLMTVLIPKLPQLHGVRIFGINKY</sequence>
<accession>Q9CPZ6</accession>
<accession>A2A4X7</accession>
<accession>Q8BN65</accession>
<accession>Q8R0U5</accession>
<feature type="chain" id="PRO_0000215640" description="ORM1-like protein 3">
    <location>
        <begin position="1"/>
        <end position="153"/>
    </location>
</feature>
<feature type="topological domain" description="Cytoplasmic" evidence="1 2">
    <location>
        <begin position="1"/>
        <end position="21"/>
    </location>
</feature>
<feature type="transmembrane region" description="Helical" evidence="1 2">
    <location>
        <begin position="22"/>
        <end position="42"/>
    </location>
</feature>
<feature type="transmembrane region" description="Helical" evidence="1 2">
    <location>
        <begin position="43"/>
        <end position="63"/>
    </location>
</feature>
<feature type="topological domain" description="Cytoplasmic" evidence="1 2">
    <location>
        <begin position="64"/>
        <end position="94"/>
    </location>
</feature>
<feature type="transmembrane region" description="Helical" evidence="1 2">
    <location>
        <begin position="95"/>
        <end position="117"/>
    </location>
</feature>
<feature type="topological domain" description="Extracellular" evidence="1 2">
    <location>
        <begin position="118"/>
        <end position="121"/>
    </location>
</feature>
<feature type="transmembrane region" description="Helical" evidence="1 2">
    <location>
        <begin position="122"/>
        <end position="142"/>
    </location>
</feature>
<feature type="topological domain" description="Cytoplasmic" evidence="1 2">
    <location>
        <begin position="143"/>
        <end position="153"/>
    </location>
</feature>
<feature type="region of interest" description="Important for ceramide level-sensing" evidence="1">
    <location>
        <begin position="1"/>
        <end position="17"/>
    </location>
</feature>
<feature type="modified residue" description="Hydroxyproline" evidence="1">
    <location>
        <position position="137"/>
    </location>
</feature>
<feature type="sequence conflict" description="In Ref. 1; BAC39898." evidence="5" ref="1">
    <original>L</original>
    <variation>Q</variation>
    <location>
        <position position="58"/>
    </location>
</feature>
<name>ORML3_MOUSE</name>